<proteinExistence type="inferred from homology"/>
<protein>
    <recommendedName>
        <fullName evidence="1">Endonuclease MutS2</fullName>
        <ecNumber evidence="1">3.1.-.-</ecNumber>
    </recommendedName>
    <alternativeName>
        <fullName evidence="1">Ribosome-associated protein quality control-upstream factor</fullName>
        <shortName evidence="1">RQC-upstream factor</shortName>
        <shortName evidence="1">RqcU</shortName>
        <ecNumber evidence="1">3.6.4.-</ecNumber>
    </alternativeName>
</protein>
<comment type="function">
    <text evidence="1">Endonuclease that is involved in the suppression of homologous recombination and thus may have a key role in the control of bacterial genetic diversity.</text>
</comment>
<comment type="function">
    <text evidence="1">Acts as a ribosome collision sensor, splitting the ribosome into its 2 subunits. Detects stalled/collided 70S ribosomes which it binds and splits by an ATP-hydrolysis driven conformational change. Acts upstream of the ribosome quality control system (RQC), a ribosome-associated complex that mediates the extraction of incompletely synthesized nascent chains from stalled ribosomes and their subsequent degradation. Probably generates substrates for RQC.</text>
</comment>
<comment type="subunit">
    <text evidence="1">Homodimer. Binds to stalled ribosomes, contacting rRNA.</text>
</comment>
<comment type="similarity">
    <text evidence="1">Belongs to the DNA mismatch repair MutS family. MutS2 subfamily.</text>
</comment>
<sequence length="792" mass="87887">MASELLRLLEFDKIRELLAARCQYSVASERAREIAPTADRDQVAYLLRVTREAARLLNERPSFTIGGFRDIRSVVQAAQRGNILAPADVRTVLDTLEAAASLRRQFMADERWSERYPALAEFVLAMVDLPGLRADLARSIGPRGEVLDTASPELAAIRRSLKEAHERLLERLRRLLAERQEAIQDAYVTIRDGRYVIPVRADRRQAVPGITHDVSGSGQTLFVEPFEVLELNNRWRELQAAETREIERILRVLTQRIADAADELLQIVEAGAALDLALAKARLAYDLDAVEPELLEPSGPTVPEGHPFLRVRLRAARHPLLDRRTAVPIDVELGERFRILVITGPNTGGKTVALKTVGLLALMAQAGLFIPAAPGSGLSVFPAIFVDIGDEQSIEQNLSTFSSHMRRIVATLQQADASSLVLLDEIAAGTDPQEGAALARAILERLLEIGALGIVTTHYPELKVFATGTPGLENASVEFDPVTLSPTYRLLVGLPGRSHALEVARRLGLPEDVIARARELLGSGAPQLDRLIAEMQRRLEEAESLAAAAERSRREAEQLRAAAERLLAEAERERREARQEVLRELEAELARARELARKIERAARSPAYPPIEVTQDSLRALEEVKRRVQSSGRQSRQERVPEIAVGDRVELTALGLEGDVVAIHPESEEVEVRIGQFRVRQPQASVRRIWPRREEVSQTFAPPVSVTTIPRVEPEIHLRGLHVEEALDRLDRYLDRAVRAGLPWVRVVHGKGTGTLRQAIHAFLRDHPLVKSWELAGPHEGGLGVTVVYLEV</sequence>
<evidence type="ECO:0000255" key="1">
    <source>
        <dbReference type="HAMAP-Rule" id="MF_00092"/>
    </source>
</evidence>
<keyword id="KW-0067">ATP-binding</keyword>
<keyword id="KW-0238">DNA-binding</keyword>
<keyword id="KW-0255">Endonuclease</keyword>
<keyword id="KW-0378">Hydrolase</keyword>
<keyword id="KW-0540">Nuclease</keyword>
<keyword id="KW-0547">Nucleotide-binding</keyword>
<keyword id="KW-1185">Reference proteome</keyword>
<keyword id="KW-0694">RNA-binding</keyword>
<keyword id="KW-0699">rRNA-binding</keyword>
<organism>
    <name type="scientific">Thermomicrobium roseum (strain ATCC 27502 / DSM 5159 / P-2)</name>
    <dbReference type="NCBI Taxonomy" id="309801"/>
    <lineage>
        <taxon>Bacteria</taxon>
        <taxon>Pseudomonadati</taxon>
        <taxon>Thermomicrobiota</taxon>
        <taxon>Thermomicrobia</taxon>
        <taxon>Thermomicrobiales</taxon>
        <taxon>Thermomicrobiaceae</taxon>
        <taxon>Thermomicrobium</taxon>
    </lineage>
</organism>
<name>MUTS2_THERP</name>
<dbReference type="EC" id="3.1.-.-" evidence="1"/>
<dbReference type="EC" id="3.6.4.-" evidence="1"/>
<dbReference type="EMBL" id="CP001275">
    <property type="protein sequence ID" value="ACM06343.1"/>
    <property type="molecule type" value="Genomic_DNA"/>
</dbReference>
<dbReference type="RefSeq" id="WP_012642064.1">
    <property type="nucleotide sequence ID" value="NC_011959.1"/>
</dbReference>
<dbReference type="SMR" id="B9KYW4"/>
<dbReference type="STRING" id="309801.trd_0668"/>
<dbReference type="KEGG" id="tro:trd_0668"/>
<dbReference type="eggNOG" id="COG1193">
    <property type="taxonomic scope" value="Bacteria"/>
</dbReference>
<dbReference type="HOGENOM" id="CLU_011252_2_1_0"/>
<dbReference type="OrthoDB" id="9808166at2"/>
<dbReference type="Proteomes" id="UP000000447">
    <property type="component" value="Chromosome"/>
</dbReference>
<dbReference type="GO" id="GO:0005524">
    <property type="term" value="F:ATP binding"/>
    <property type="evidence" value="ECO:0007669"/>
    <property type="project" value="UniProtKB-UniRule"/>
</dbReference>
<dbReference type="GO" id="GO:0016887">
    <property type="term" value="F:ATP hydrolysis activity"/>
    <property type="evidence" value="ECO:0007669"/>
    <property type="project" value="InterPro"/>
</dbReference>
<dbReference type="GO" id="GO:0140664">
    <property type="term" value="F:ATP-dependent DNA damage sensor activity"/>
    <property type="evidence" value="ECO:0007669"/>
    <property type="project" value="InterPro"/>
</dbReference>
<dbReference type="GO" id="GO:0004519">
    <property type="term" value="F:endonuclease activity"/>
    <property type="evidence" value="ECO:0007669"/>
    <property type="project" value="UniProtKB-UniRule"/>
</dbReference>
<dbReference type="GO" id="GO:0030983">
    <property type="term" value="F:mismatched DNA binding"/>
    <property type="evidence" value="ECO:0007669"/>
    <property type="project" value="InterPro"/>
</dbReference>
<dbReference type="GO" id="GO:0043023">
    <property type="term" value="F:ribosomal large subunit binding"/>
    <property type="evidence" value="ECO:0007669"/>
    <property type="project" value="UniProtKB-UniRule"/>
</dbReference>
<dbReference type="GO" id="GO:0019843">
    <property type="term" value="F:rRNA binding"/>
    <property type="evidence" value="ECO:0007669"/>
    <property type="project" value="UniProtKB-UniRule"/>
</dbReference>
<dbReference type="GO" id="GO:0006298">
    <property type="term" value="P:mismatch repair"/>
    <property type="evidence" value="ECO:0007669"/>
    <property type="project" value="InterPro"/>
</dbReference>
<dbReference type="GO" id="GO:0045910">
    <property type="term" value="P:negative regulation of DNA recombination"/>
    <property type="evidence" value="ECO:0007669"/>
    <property type="project" value="InterPro"/>
</dbReference>
<dbReference type="GO" id="GO:0072344">
    <property type="term" value="P:rescue of stalled ribosome"/>
    <property type="evidence" value="ECO:0007669"/>
    <property type="project" value="UniProtKB-UniRule"/>
</dbReference>
<dbReference type="CDD" id="cd03280">
    <property type="entry name" value="ABC_MutS2"/>
    <property type="match status" value="1"/>
</dbReference>
<dbReference type="FunFam" id="3.40.50.300:FF:000830">
    <property type="entry name" value="Endonuclease MutS2"/>
    <property type="match status" value="1"/>
</dbReference>
<dbReference type="Gene3D" id="3.30.1370.110">
    <property type="match status" value="1"/>
</dbReference>
<dbReference type="Gene3D" id="3.40.50.300">
    <property type="entry name" value="P-loop containing nucleotide triphosphate hydrolases"/>
    <property type="match status" value="1"/>
</dbReference>
<dbReference type="HAMAP" id="MF_00092">
    <property type="entry name" value="MutS2"/>
    <property type="match status" value="1"/>
</dbReference>
<dbReference type="InterPro" id="IPR000432">
    <property type="entry name" value="DNA_mismatch_repair_MutS_C"/>
</dbReference>
<dbReference type="InterPro" id="IPR007696">
    <property type="entry name" value="DNA_mismatch_repair_MutS_core"/>
</dbReference>
<dbReference type="InterPro" id="IPR036187">
    <property type="entry name" value="DNA_mismatch_repair_MutS_sf"/>
</dbReference>
<dbReference type="InterPro" id="IPR045076">
    <property type="entry name" value="MutS"/>
</dbReference>
<dbReference type="InterPro" id="IPR005747">
    <property type="entry name" value="MutS2"/>
</dbReference>
<dbReference type="InterPro" id="IPR027417">
    <property type="entry name" value="P-loop_NTPase"/>
</dbReference>
<dbReference type="InterPro" id="IPR002625">
    <property type="entry name" value="Smr_dom"/>
</dbReference>
<dbReference type="InterPro" id="IPR036063">
    <property type="entry name" value="Smr_dom_sf"/>
</dbReference>
<dbReference type="NCBIfam" id="TIGR01069">
    <property type="entry name" value="mutS2"/>
    <property type="match status" value="1"/>
</dbReference>
<dbReference type="PANTHER" id="PTHR48466:SF2">
    <property type="entry name" value="OS10G0509000 PROTEIN"/>
    <property type="match status" value="1"/>
</dbReference>
<dbReference type="PANTHER" id="PTHR48466">
    <property type="entry name" value="OS10G0509000 PROTEIN-RELATED"/>
    <property type="match status" value="1"/>
</dbReference>
<dbReference type="Pfam" id="PF00488">
    <property type="entry name" value="MutS_V"/>
    <property type="match status" value="1"/>
</dbReference>
<dbReference type="Pfam" id="PF01713">
    <property type="entry name" value="Smr"/>
    <property type="match status" value="1"/>
</dbReference>
<dbReference type="PIRSF" id="PIRSF005814">
    <property type="entry name" value="MutS_YshD"/>
    <property type="match status" value="1"/>
</dbReference>
<dbReference type="SMART" id="SM00534">
    <property type="entry name" value="MUTSac"/>
    <property type="match status" value="1"/>
</dbReference>
<dbReference type="SMART" id="SM00533">
    <property type="entry name" value="MUTSd"/>
    <property type="match status" value="1"/>
</dbReference>
<dbReference type="SMART" id="SM00463">
    <property type="entry name" value="SMR"/>
    <property type="match status" value="1"/>
</dbReference>
<dbReference type="SUPFAM" id="SSF48334">
    <property type="entry name" value="DNA repair protein MutS, domain III"/>
    <property type="match status" value="1"/>
</dbReference>
<dbReference type="SUPFAM" id="SSF52540">
    <property type="entry name" value="P-loop containing nucleoside triphosphate hydrolases"/>
    <property type="match status" value="1"/>
</dbReference>
<dbReference type="SUPFAM" id="SSF160443">
    <property type="entry name" value="SMR domain-like"/>
    <property type="match status" value="1"/>
</dbReference>
<dbReference type="PROSITE" id="PS00486">
    <property type="entry name" value="DNA_MISMATCH_REPAIR_2"/>
    <property type="match status" value="1"/>
</dbReference>
<dbReference type="PROSITE" id="PS50828">
    <property type="entry name" value="SMR"/>
    <property type="match status" value="1"/>
</dbReference>
<accession>B9KYW4</accession>
<reference key="1">
    <citation type="journal article" date="2009" name="PLoS ONE">
        <title>Complete genome sequence of the aerobic CO-oxidizing thermophile Thermomicrobium roseum.</title>
        <authorList>
            <person name="Wu D."/>
            <person name="Raymond J."/>
            <person name="Wu M."/>
            <person name="Chatterji S."/>
            <person name="Ren Q."/>
            <person name="Graham J.E."/>
            <person name="Bryant D.A."/>
            <person name="Robb F."/>
            <person name="Colman A."/>
            <person name="Tallon L.J."/>
            <person name="Badger J.H."/>
            <person name="Madupu R."/>
            <person name="Ward N.L."/>
            <person name="Eisen J.A."/>
        </authorList>
    </citation>
    <scope>NUCLEOTIDE SEQUENCE [LARGE SCALE GENOMIC DNA]</scope>
    <source>
        <strain>ATCC 27502 / DSM 5159 / P-2</strain>
    </source>
</reference>
<gene>
    <name evidence="1" type="primary">mutS2</name>
    <name evidence="1" type="synonym">rqcU</name>
    <name type="ordered locus">trd_0668</name>
</gene>
<feature type="chain" id="PRO_1000118574" description="Endonuclease MutS2">
    <location>
        <begin position="1"/>
        <end position="792"/>
    </location>
</feature>
<feature type="domain" description="Smr" evidence="1">
    <location>
        <begin position="716"/>
        <end position="791"/>
    </location>
</feature>
<feature type="binding site" evidence="1">
    <location>
        <begin position="344"/>
        <end position="351"/>
    </location>
    <ligand>
        <name>ATP</name>
        <dbReference type="ChEBI" id="CHEBI:30616"/>
    </ligand>
</feature>